<name>RR16_DRIGR</name>
<feature type="chain" id="PRO_0000276944" description="Small ribosomal subunit protein bS16c">
    <location>
        <begin position="1"/>
        <end position="89"/>
    </location>
</feature>
<proteinExistence type="inferred from homology"/>
<geneLocation type="chloroplast"/>
<keyword id="KW-0150">Chloroplast</keyword>
<keyword id="KW-0934">Plastid</keyword>
<keyword id="KW-0687">Ribonucleoprotein</keyword>
<keyword id="KW-0689">Ribosomal protein</keyword>
<accession>Q06H15</accession>
<reference key="1">
    <citation type="journal article" date="2006" name="BMC Evol. Biol.">
        <title>Complete plastid genome sequences of Drimys, Liriodendron, and Piper: implications for the phylogenetic relationships of magnoliids.</title>
        <authorList>
            <person name="Cai Z."/>
            <person name="Penaflor C."/>
            <person name="Kuehl J.V."/>
            <person name="Leebens-Mack J."/>
            <person name="Carlson J.E."/>
            <person name="dePamphilis C.W."/>
            <person name="Boore J.L."/>
            <person name="Jansen R.K."/>
        </authorList>
    </citation>
    <scope>NUCLEOTIDE SEQUENCE [LARGE SCALE GENOMIC DNA]</scope>
</reference>
<comment type="subcellular location">
    <subcellularLocation>
        <location>Plastid</location>
        <location>Chloroplast</location>
    </subcellularLocation>
</comment>
<comment type="similarity">
    <text evidence="1">Belongs to the bacterial ribosomal protein bS16 family.</text>
</comment>
<sequence>MVKLRLKRCGRKQRAIYRIVAIDVRSQREGRDLRKVGFYDPIKNQTYSNVPAILYFLEKGAQPTGTVHDISKKAEVFKELRINQTKSNK</sequence>
<evidence type="ECO:0000255" key="1">
    <source>
        <dbReference type="HAMAP-Rule" id="MF_00385"/>
    </source>
</evidence>
<evidence type="ECO:0000305" key="2"/>
<gene>
    <name evidence="1" type="primary">rps16</name>
</gene>
<organism>
    <name type="scientific">Drimys granadensis</name>
    <dbReference type="NCBI Taxonomy" id="224735"/>
    <lineage>
        <taxon>Eukaryota</taxon>
        <taxon>Viridiplantae</taxon>
        <taxon>Streptophyta</taxon>
        <taxon>Embryophyta</taxon>
        <taxon>Tracheophyta</taxon>
        <taxon>Spermatophyta</taxon>
        <taxon>Magnoliopsida</taxon>
        <taxon>Magnoliidae</taxon>
        <taxon>Canellales</taxon>
        <taxon>Winteraceae</taxon>
        <taxon>Drimys</taxon>
    </lineage>
</organism>
<protein>
    <recommendedName>
        <fullName evidence="1">Small ribosomal subunit protein bS16c</fullName>
    </recommendedName>
    <alternativeName>
        <fullName evidence="2">30S ribosomal protein S16, chloroplastic</fullName>
    </alternativeName>
</protein>
<dbReference type="EMBL" id="DQ887676">
    <property type="protein sequence ID" value="ABH88279.1"/>
    <property type="molecule type" value="Genomic_DNA"/>
</dbReference>
<dbReference type="RefSeq" id="YP_784368.1">
    <property type="nucleotide sequence ID" value="NC_008456.1"/>
</dbReference>
<dbReference type="SMR" id="Q06H15"/>
<dbReference type="GeneID" id="4363626"/>
<dbReference type="GO" id="GO:0009507">
    <property type="term" value="C:chloroplast"/>
    <property type="evidence" value="ECO:0007669"/>
    <property type="project" value="UniProtKB-SubCell"/>
</dbReference>
<dbReference type="GO" id="GO:0005739">
    <property type="term" value="C:mitochondrion"/>
    <property type="evidence" value="ECO:0007669"/>
    <property type="project" value="GOC"/>
</dbReference>
<dbReference type="GO" id="GO:0015935">
    <property type="term" value="C:small ribosomal subunit"/>
    <property type="evidence" value="ECO:0007669"/>
    <property type="project" value="TreeGrafter"/>
</dbReference>
<dbReference type="GO" id="GO:0003735">
    <property type="term" value="F:structural constituent of ribosome"/>
    <property type="evidence" value="ECO:0007669"/>
    <property type="project" value="InterPro"/>
</dbReference>
<dbReference type="GO" id="GO:0032543">
    <property type="term" value="P:mitochondrial translation"/>
    <property type="evidence" value="ECO:0007669"/>
    <property type="project" value="TreeGrafter"/>
</dbReference>
<dbReference type="FunFam" id="3.30.1320.10:FF:000003">
    <property type="entry name" value="30S ribosomal protein S16, chloroplastic"/>
    <property type="match status" value="1"/>
</dbReference>
<dbReference type="Gene3D" id="3.30.1320.10">
    <property type="match status" value="1"/>
</dbReference>
<dbReference type="HAMAP" id="MF_00385">
    <property type="entry name" value="Ribosomal_bS16"/>
    <property type="match status" value="1"/>
</dbReference>
<dbReference type="InterPro" id="IPR000307">
    <property type="entry name" value="Ribosomal_bS16"/>
</dbReference>
<dbReference type="InterPro" id="IPR020592">
    <property type="entry name" value="Ribosomal_bS16_CS"/>
</dbReference>
<dbReference type="InterPro" id="IPR023803">
    <property type="entry name" value="Ribosomal_bS16_dom_sf"/>
</dbReference>
<dbReference type="NCBIfam" id="TIGR00002">
    <property type="entry name" value="S16"/>
    <property type="match status" value="1"/>
</dbReference>
<dbReference type="PANTHER" id="PTHR12919">
    <property type="entry name" value="30S RIBOSOMAL PROTEIN S16"/>
    <property type="match status" value="1"/>
</dbReference>
<dbReference type="PANTHER" id="PTHR12919:SF20">
    <property type="entry name" value="SMALL RIBOSOMAL SUBUNIT PROTEIN BS16M"/>
    <property type="match status" value="1"/>
</dbReference>
<dbReference type="Pfam" id="PF00886">
    <property type="entry name" value="Ribosomal_S16"/>
    <property type="match status" value="1"/>
</dbReference>
<dbReference type="SUPFAM" id="SSF54565">
    <property type="entry name" value="Ribosomal protein S16"/>
    <property type="match status" value="1"/>
</dbReference>
<dbReference type="PROSITE" id="PS00732">
    <property type="entry name" value="RIBOSOMAL_S16"/>
    <property type="match status" value="1"/>
</dbReference>